<keyword id="KW-0963">Cytoplasm</keyword>
<keyword id="KW-0690">Ribosome biogenesis</keyword>
<evidence type="ECO:0000255" key="1">
    <source>
        <dbReference type="HAMAP-Rule" id="MF_00003"/>
    </source>
</evidence>
<accession>B8FR05</accession>
<sequence>MAKHRSNRLAETLKQEISQLIREELKDPRIGFVTVTSVEVADDLGNAKVYVSVLGDSQQAKDSLDALKRAAGFVRSEIGKRVRLRHAPEIVFKYDTSIEHGAHIAQLLRGVKQEEEKDEGESHDQ</sequence>
<dbReference type="EMBL" id="CP001336">
    <property type="protein sequence ID" value="ACL21692.1"/>
    <property type="molecule type" value="Genomic_DNA"/>
</dbReference>
<dbReference type="RefSeq" id="WP_011460392.1">
    <property type="nucleotide sequence ID" value="NC_011830.1"/>
</dbReference>
<dbReference type="SMR" id="B8FR05"/>
<dbReference type="KEGG" id="dhd:Dhaf_3675"/>
<dbReference type="HOGENOM" id="CLU_089475_6_3_9"/>
<dbReference type="Proteomes" id="UP000007726">
    <property type="component" value="Chromosome"/>
</dbReference>
<dbReference type="GO" id="GO:0005829">
    <property type="term" value="C:cytosol"/>
    <property type="evidence" value="ECO:0007669"/>
    <property type="project" value="TreeGrafter"/>
</dbReference>
<dbReference type="GO" id="GO:0043024">
    <property type="term" value="F:ribosomal small subunit binding"/>
    <property type="evidence" value="ECO:0007669"/>
    <property type="project" value="TreeGrafter"/>
</dbReference>
<dbReference type="GO" id="GO:0030490">
    <property type="term" value="P:maturation of SSU-rRNA"/>
    <property type="evidence" value="ECO:0007669"/>
    <property type="project" value="UniProtKB-UniRule"/>
</dbReference>
<dbReference type="Gene3D" id="3.30.300.20">
    <property type="match status" value="1"/>
</dbReference>
<dbReference type="HAMAP" id="MF_00003">
    <property type="entry name" value="RbfA"/>
    <property type="match status" value="1"/>
</dbReference>
<dbReference type="InterPro" id="IPR015946">
    <property type="entry name" value="KH_dom-like_a/b"/>
</dbReference>
<dbReference type="InterPro" id="IPR000238">
    <property type="entry name" value="RbfA"/>
</dbReference>
<dbReference type="InterPro" id="IPR023799">
    <property type="entry name" value="RbfA_dom_sf"/>
</dbReference>
<dbReference type="InterPro" id="IPR020053">
    <property type="entry name" value="Ribosome-bd_factorA_CS"/>
</dbReference>
<dbReference type="NCBIfam" id="TIGR00082">
    <property type="entry name" value="rbfA"/>
    <property type="match status" value="1"/>
</dbReference>
<dbReference type="PANTHER" id="PTHR33515">
    <property type="entry name" value="RIBOSOME-BINDING FACTOR A, CHLOROPLASTIC-RELATED"/>
    <property type="match status" value="1"/>
</dbReference>
<dbReference type="PANTHER" id="PTHR33515:SF1">
    <property type="entry name" value="RIBOSOME-BINDING FACTOR A, CHLOROPLASTIC-RELATED"/>
    <property type="match status" value="1"/>
</dbReference>
<dbReference type="Pfam" id="PF02033">
    <property type="entry name" value="RBFA"/>
    <property type="match status" value="1"/>
</dbReference>
<dbReference type="SUPFAM" id="SSF89919">
    <property type="entry name" value="Ribosome-binding factor A, RbfA"/>
    <property type="match status" value="1"/>
</dbReference>
<dbReference type="PROSITE" id="PS01319">
    <property type="entry name" value="RBFA"/>
    <property type="match status" value="1"/>
</dbReference>
<name>RBFA_DESHD</name>
<comment type="function">
    <text evidence="1">One of several proteins that assist in the late maturation steps of the functional core of the 30S ribosomal subunit. Associates with free 30S ribosomal subunits (but not with 30S subunits that are part of 70S ribosomes or polysomes). Required for efficient processing of 16S rRNA. May interact with the 5'-terminal helix region of 16S rRNA.</text>
</comment>
<comment type="subunit">
    <text evidence="1">Monomer. Binds 30S ribosomal subunits, but not 50S ribosomal subunits or 70S ribosomes.</text>
</comment>
<comment type="subcellular location">
    <subcellularLocation>
        <location evidence="1">Cytoplasm</location>
    </subcellularLocation>
</comment>
<comment type="similarity">
    <text evidence="1">Belongs to the RbfA family.</text>
</comment>
<feature type="chain" id="PRO_1000193250" description="Ribosome-binding factor A">
    <location>
        <begin position="1"/>
        <end position="125"/>
    </location>
</feature>
<proteinExistence type="inferred from homology"/>
<reference key="1">
    <citation type="journal article" date="2012" name="BMC Microbiol.">
        <title>Genome sequence of Desulfitobacterium hafniense DCB-2, a Gram-positive anaerobe capable of dehalogenation and metal reduction.</title>
        <authorList>
            <person name="Kim S.H."/>
            <person name="Harzman C."/>
            <person name="Davis J.K."/>
            <person name="Hutcheson R."/>
            <person name="Broderick J.B."/>
            <person name="Marsh T.L."/>
            <person name="Tiedje J.M."/>
        </authorList>
    </citation>
    <scope>NUCLEOTIDE SEQUENCE [LARGE SCALE GENOMIC DNA]</scope>
    <source>
        <strain>DSM 10664 / DCB-2</strain>
    </source>
</reference>
<gene>
    <name evidence="1" type="primary">rbfA</name>
    <name type="ordered locus">Dhaf_3675</name>
</gene>
<protein>
    <recommendedName>
        <fullName evidence="1">Ribosome-binding factor A</fullName>
    </recommendedName>
</protein>
<organism>
    <name type="scientific">Desulfitobacterium hafniense (strain DSM 10664 / DCB-2)</name>
    <dbReference type="NCBI Taxonomy" id="272564"/>
    <lineage>
        <taxon>Bacteria</taxon>
        <taxon>Bacillati</taxon>
        <taxon>Bacillota</taxon>
        <taxon>Clostridia</taxon>
        <taxon>Eubacteriales</taxon>
        <taxon>Desulfitobacteriaceae</taxon>
        <taxon>Desulfitobacterium</taxon>
    </lineage>
</organism>